<proteinExistence type="predicted"/>
<dbReference type="EMBL" id="AE000782">
    <property type="protein sequence ID" value="AAB91159.1"/>
    <property type="molecule type" value="Genomic_DNA"/>
</dbReference>
<dbReference type="PIR" id="A69259">
    <property type="entry name" value="A69259"/>
</dbReference>
<dbReference type="STRING" id="224325.AF_0073"/>
<dbReference type="PaxDb" id="224325-AF_0073"/>
<dbReference type="EnsemblBacteria" id="AAB91159">
    <property type="protein sequence ID" value="AAB91159"/>
    <property type="gene ID" value="AF_0073"/>
</dbReference>
<dbReference type="KEGG" id="afu:AF_0073"/>
<dbReference type="HOGENOM" id="CLU_3412275_0_0_2"/>
<dbReference type="Proteomes" id="UP000002199">
    <property type="component" value="Chromosome"/>
</dbReference>
<accession>O30163</accession>
<organism>
    <name type="scientific">Archaeoglobus fulgidus (strain ATCC 49558 / DSM 4304 / JCM 9628 / NBRC 100126 / VC-16)</name>
    <dbReference type="NCBI Taxonomy" id="224325"/>
    <lineage>
        <taxon>Archaea</taxon>
        <taxon>Methanobacteriati</taxon>
        <taxon>Methanobacteriota</taxon>
        <taxon>Archaeoglobi</taxon>
        <taxon>Archaeoglobales</taxon>
        <taxon>Archaeoglobaceae</taxon>
        <taxon>Archaeoglobus</taxon>
    </lineage>
</organism>
<name>Y073_ARCFU</name>
<keyword id="KW-1185">Reference proteome</keyword>
<sequence length="28" mass="3222">MVGNFPGANYSRDTRRAEIDIQIDIQKI</sequence>
<feature type="chain" id="PRO_0000127823" description="Uncharacterized protein AF_0073">
    <location>
        <begin position="1"/>
        <end position="28"/>
    </location>
</feature>
<protein>
    <recommendedName>
        <fullName>Uncharacterized protein AF_0073</fullName>
    </recommendedName>
</protein>
<reference key="1">
    <citation type="journal article" date="1997" name="Nature">
        <title>The complete genome sequence of the hyperthermophilic, sulphate-reducing archaeon Archaeoglobus fulgidus.</title>
        <authorList>
            <person name="Klenk H.-P."/>
            <person name="Clayton R.A."/>
            <person name="Tomb J.-F."/>
            <person name="White O."/>
            <person name="Nelson K.E."/>
            <person name="Ketchum K.A."/>
            <person name="Dodson R.J."/>
            <person name="Gwinn M.L."/>
            <person name="Hickey E.K."/>
            <person name="Peterson J.D."/>
            <person name="Richardson D.L."/>
            <person name="Kerlavage A.R."/>
            <person name="Graham D.E."/>
            <person name="Kyrpides N.C."/>
            <person name="Fleischmann R.D."/>
            <person name="Quackenbush J."/>
            <person name="Lee N.H."/>
            <person name="Sutton G.G."/>
            <person name="Gill S.R."/>
            <person name="Kirkness E.F."/>
            <person name="Dougherty B.A."/>
            <person name="McKenney K."/>
            <person name="Adams M.D."/>
            <person name="Loftus B.J."/>
            <person name="Peterson S.N."/>
            <person name="Reich C.I."/>
            <person name="McNeil L.K."/>
            <person name="Badger J.H."/>
            <person name="Glodek A."/>
            <person name="Zhou L."/>
            <person name="Overbeek R."/>
            <person name="Gocayne J.D."/>
            <person name="Weidman J.F."/>
            <person name="McDonald L.A."/>
            <person name="Utterback T.R."/>
            <person name="Cotton M.D."/>
            <person name="Spriggs T."/>
            <person name="Artiach P."/>
            <person name="Kaine B.P."/>
            <person name="Sykes S.M."/>
            <person name="Sadow P.W."/>
            <person name="D'Andrea K.P."/>
            <person name="Bowman C."/>
            <person name="Fujii C."/>
            <person name="Garland S.A."/>
            <person name="Mason T.M."/>
            <person name="Olsen G.J."/>
            <person name="Fraser C.M."/>
            <person name="Smith H.O."/>
            <person name="Woese C.R."/>
            <person name="Venter J.C."/>
        </authorList>
    </citation>
    <scope>NUCLEOTIDE SEQUENCE [LARGE SCALE GENOMIC DNA]</scope>
    <source>
        <strain>ATCC 49558 / DSM 4304 / JCM 9628 / NBRC 100126 / VC-16</strain>
    </source>
</reference>
<gene>
    <name type="ordered locus">AF_0073</name>
</gene>